<gene>
    <name evidence="1" type="primary">murA1</name>
    <name type="synonym">murA</name>
    <name type="ordered locus">SE_1698</name>
</gene>
<sequence length="421" mass="45120">MDKIVINGGNRLTGEVNVEGAKNAVLPVLTASLLASEGHSKLVNVPELSDVETINNVLSTLNANVEYDKDKNAVKVDATKTLNEEAPYEYVSKMRASILVMGPLLARLGHAIVALPGGCAIGTRPIEQHIKGFEALGADIHLENGNIYANAKDGLKGAHIHLDFPSVGATQNIIMAASLASGKSIIENVAKEPEIVDLANYINEMGGKITGAGTDTITIHGVEKLYGVEHAIIPDRIEAGTLLIAGAITRGDIFVRGAIKEHMASLIYKLEEMGVDLEYYEEGIRVTANGDLNPVDVKTLPHPGFPTDMQSQMMALLLTANGHKVITETVFENRFMHVAEFRRMNANISVEGRSAKIEGKSHLQGAQVKATDLRAAAALILAGLVAEGTTQVTELKHLDRGYVNLHGKLKSLGANIERVNR</sequence>
<comment type="function">
    <text evidence="1">Cell wall formation. Adds enolpyruvyl to UDP-N-acetylglucosamine.</text>
</comment>
<comment type="catalytic activity">
    <reaction evidence="1">
        <text>phosphoenolpyruvate + UDP-N-acetyl-alpha-D-glucosamine = UDP-N-acetyl-3-O-(1-carboxyvinyl)-alpha-D-glucosamine + phosphate</text>
        <dbReference type="Rhea" id="RHEA:18681"/>
        <dbReference type="ChEBI" id="CHEBI:43474"/>
        <dbReference type="ChEBI" id="CHEBI:57705"/>
        <dbReference type="ChEBI" id="CHEBI:58702"/>
        <dbReference type="ChEBI" id="CHEBI:68483"/>
        <dbReference type="EC" id="2.5.1.7"/>
    </reaction>
</comment>
<comment type="pathway">
    <text evidence="1">Cell wall biogenesis; peptidoglycan biosynthesis.</text>
</comment>
<comment type="subcellular location">
    <subcellularLocation>
        <location evidence="1">Cytoplasm</location>
    </subcellularLocation>
</comment>
<comment type="similarity">
    <text evidence="1">Belongs to the EPSP synthase family. MurA subfamily.</text>
</comment>
<accession>Q8CRN6</accession>
<protein>
    <recommendedName>
        <fullName evidence="1">UDP-N-acetylglucosamine 1-carboxyvinyltransferase 1</fullName>
        <ecNumber evidence="1">2.5.1.7</ecNumber>
    </recommendedName>
    <alternativeName>
        <fullName evidence="1">Enoylpyruvate transferase 1</fullName>
    </alternativeName>
    <alternativeName>
        <fullName evidence="1">UDP-N-acetylglucosamine enolpyruvyl transferase 1</fullName>
        <shortName evidence="1">EPT 1</shortName>
    </alternativeName>
</protein>
<name>MURA1_STAES</name>
<organism>
    <name type="scientific">Staphylococcus epidermidis (strain ATCC 12228 / FDA PCI 1200)</name>
    <dbReference type="NCBI Taxonomy" id="176280"/>
    <lineage>
        <taxon>Bacteria</taxon>
        <taxon>Bacillati</taxon>
        <taxon>Bacillota</taxon>
        <taxon>Bacilli</taxon>
        <taxon>Bacillales</taxon>
        <taxon>Staphylococcaceae</taxon>
        <taxon>Staphylococcus</taxon>
    </lineage>
</organism>
<feature type="chain" id="PRO_0000178926" description="UDP-N-acetylglucosamine 1-carboxyvinyltransferase 1">
    <location>
        <begin position="1"/>
        <end position="421"/>
    </location>
</feature>
<feature type="active site" description="Proton donor" evidence="1">
    <location>
        <position position="119"/>
    </location>
</feature>
<feature type="binding site" evidence="1">
    <location>
        <begin position="22"/>
        <end position="23"/>
    </location>
    <ligand>
        <name>phosphoenolpyruvate</name>
        <dbReference type="ChEBI" id="CHEBI:58702"/>
    </ligand>
</feature>
<feature type="binding site" evidence="1">
    <location>
        <position position="95"/>
    </location>
    <ligand>
        <name>UDP-N-acetyl-alpha-D-glucosamine</name>
        <dbReference type="ChEBI" id="CHEBI:57705"/>
    </ligand>
</feature>
<feature type="binding site" evidence="1">
    <location>
        <begin position="124"/>
        <end position="128"/>
    </location>
    <ligand>
        <name>UDP-N-acetyl-alpha-D-glucosamine</name>
        <dbReference type="ChEBI" id="CHEBI:57705"/>
    </ligand>
</feature>
<feature type="binding site" evidence="1">
    <location>
        <position position="308"/>
    </location>
    <ligand>
        <name>UDP-N-acetyl-alpha-D-glucosamine</name>
        <dbReference type="ChEBI" id="CHEBI:57705"/>
    </ligand>
</feature>
<feature type="binding site" evidence="1">
    <location>
        <position position="330"/>
    </location>
    <ligand>
        <name>UDP-N-acetyl-alpha-D-glucosamine</name>
        <dbReference type="ChEBI" id="CHEBI:57705"/>
    </ligand>
</feature>
<feature type="modified residue" description="2-(S-cysteinyl)pyruvic acid O-phosphothioketal" evidence="1">
    <location>
        <position position="119"/>
    </location>
</feature>
<proteinExistence type="inferred from homology"/>
<evidence type="ECO:0000255" key="1">
    <source>
        <dbReference type="HAMAP-Rule" id="MF_00111"/>
    </source>
</evidence>
<keyword id="KW-0131">Cell cycle</keyword>
<keyword id="KW-0132">Cell division</keyword>
<keyword id="KW-0133">Cell shape</keyword>
<keyword id="KW-0961">Cell wall biogenesis/degradation</keyword>
<keyword id="KW-0963">Cytoplasm</keyword>
<keyword id="KW-0573">Peptidoglycan synthesis</keyword>
<keyword id="KW-0670">Pyruvate</keyword>
<keyword id="KW-0808">Transferase</keyword>
<reference key="1">
    <citation type="journal article" date="2003" name="Mol. Microbiol.">
        <title>Genome-based analysis of virulence genes in a non-biofilm-forming Staphylococcus epidermidis strain (ATCC 12228).</title>
        <authorList>
            <person name="Zhang Y.-Q."/>
            <person name="Ren S.-X."/>
            <person name="Li H.-L."/>
            <person name="Wang Y.-X."/>
            <person name="Fu G."/>
            <person name="Yang J."/>
            <person name="Qin Z.-Q."/>
            <person name="Miao Y.-G."/>
            <person name="Wang W.-Y."/>
            <person name="Chen R.-S."/>
            <person name="Shen Y."/>
            <person name="Chen Z."/>
            <person name="Yuan Z.-H."/>
            <person name="Zhao G.-P."/>
            <person name="Qu D."/>
            <person name="Danchin A."/>
            <person name="Wen Y.-M."/>
        </authorList>
    </citation>
    <scope>NUCLEOTIDE SEQUENCE [LARGE SCALE GENOMIC DNA]</scope>
    <source>
        <strain>ATCC 12228 / FDA PCI 1200</strain>
    </source>
</reference>
<dbReference type="EC" id="2.5.1.7" evidence="1"/>
<dbReference type="EMBL" id="AE015929">
    <property type="protein sequence ID" value="AAO05297.1"/>
    <property type="molecule type" value="Genomic_DNA"/>
</dbReference>
<dbReference type="RefSeq" id="NP_765253.1">
    <property type="nucleotide sequence ID" value="NC_004461.1"/>
</dbReference>
<dbReference type="RefSeq" id="WP_001829978.1">
    <property type="nucleotide sequence ID" value="NZ_WBME01000021.1"/>
</dbReference>
<dbReference type="SMR" id="Q8CRN6"/>
<dbReference type="GeneID" id="50018202"/>
<dbReference type="KEGG" id="sep:SE_1698"/>
<dbReference type="PATRIC" id="fig|176280.10.peg.1658"/>
<dbReference type="eggNOG" id="COG0766">
    <property type="taxonomic scope" value="Bacteria"/>
</dbReference>
<dbReference type="HOGENOM" id="CLU_027387_0_0_9"/>
<dbReference type="OrthoDB" id="9803760at2"/>
<dbReference type="UniPathway" id="UPA00219"/>
<dbReference type="Proteomes" id="UP000001411">
    <property type="component" value="Chromosome"/>
</dbReference>
<dbReference type="GO" id="GO:0005737">
    <property type="term" value="C:cytoplasm"/>
    <property type="evidence" value="ECO:0007669"/>
    <property type="project" value="UniProtKB-SubCell"/>
</dbReference>
<dbReference type="GO" id="GO:0008760">
    <property type="term" value="F:UDP-N-acetylglucosamine 1-carboxyvinyltransferase activity"/>
    <property type="evidence" value="ECO:0007669"/>
    <property type="project" value="UniProtKB-UniRule"/>
</dbReference>
<dbReference type="GO" id="GO:0051301">
    <property type="term" value="P:cell division"/>
    <property type="evidence" value="ECO:0007669"/>
    <property type="project" value="UniProtKB-KW"/>
</dbReference>
<dbReference type="GO" id="GO:0071555">
    <property type="term" value="P:cell wall organization"/>
    <property type="evidence" value="ECO:0007669"/>
    <property type="project" value="UniProtKB-KW"/>
</dbReference>
<dbReference type="GO" id="GO:0009252">
    <property type="term" value="P:peptidoglycan biosynthetic process"/>
    <property type="evidence" value="ECO:0007669"/>
    <property type="project" value="UniProtKB-UniRule"/>
</dbReference>
<dbReference type="GO" id="GO:0008360">
    <property type="term" value="P:regulation of cell shape"/>
    <property type="evidence" value="ECO:0007669"/>
    <property type="project" value="UniProtKB-KW"/>
</dbReference>
<dbReference type="GO" id="GO:0019277">
    <property type="term" value="P:UDP-N-acetylgalactosamine biosynthetic process"/>
    <property type="evidence" value="ECO:0007669"/>
    <property type="project" value="InterPro"/>
</dbReference>
<dbReference type="CDD" id="cd01555">
    <property type="entry name" value="UdpNAET"/>
    <property type="match status" value="1"/>
</dbReference>
<dbReference type="FunFam" id="3.65.10.10:FF:000001">
    <property type="entry name" value="UDP-N-acetylglucosamine 1-carboxyvinyltransferase"/>
    <property type="match status" value="1"/>
</dbReference>
<dbReference type="Gene3D" id="3.65.10.10">
    <property type="entry name" value="Enolpyruvate transferase domain"/>
    <property type="match status" value="2"/>
</dbReference>
<dbReference type="HAMAP" id="MF_00111">
    <property type="entry name" value="MurA"/>
    <property type="match status" value="1"/>
</dbReference>
<dbReference type="InterPro" id="IPR001986">
    <property type="entry name" value="Enolpyruvate_Tfrase_dom"/>
</dbReference>
<dbReference type="InterPro" id="IPR036968">
    <property type="entry name" value="Enolpyruvate_Tfrase_sf"/>
</dbReference>
<dbReference type="InterPro" id="IPR050068">
    <property type="entry name" value="MurA_subfamily"/>
</dbReference>
<dbReference type="InterPro" id="IPR013792">
    <property type="entry name" value="RNA3'P_cycl/enolpyr_Trfase_a/b"/>
</dbReference>
<dbReference type="InterPro" id="IPR005750">
    <property type="entry name" value="UDP_GlcNAc_COvinyl_MurA"/>
</dbReference>
<dbReference type="NCBIfam" id="TIGR01072">
    <property type="entry name" value="murA"/>
    <property type="match status" value="1"/>
</dbReference>
<dbReference type="NCBIfam" id="NF006873">
    <property type="entry name" value="PRK09369.1"/>
    <property type="match status" value="1"/>
</dbReference>
<dbReference type="PANTHER" id="PTHR43783">
    <property type="entry name" value="UDP-N-ACETYLGLUCOSAMINE 1-CARBOXYVINYLTRANSFERASE"/>
    <property type="match status" value="1"/>
</dbReference>
<dbReference type="PANTHER" id="PTHR43783:SF1">
    <property type="entry name" value="UDP-N-ACETYLGLUCOSAMINE 1-CARBOXYVINYLTRANSFERASE"/>
    <property type="match status" value="1"/>
</dbReference>
<dbReference type="Pfam" id="PF00275">
    <property type="entry name" value="EPSP_synthase"/>
    <property type="match status" value="1"/>
</dbReference>
<dbReference type="SUPFAM" id="SSF55205">
    <property type="entry name" value="EPT/RTPC-like"/>
    <property type="match status" value="1"/>
</dbReference>